<sequence length="309" mass="35952">MCMLLREIITHVPCVKCGFFVIFNNVKQRFKKYILIQSLLSPSYFNITDAKSFIETYSCIYKDRPMIVWIDSPYYVEHGCDMRRAKVYVTSHYVKKLLNGTIHVDGVLRPPFNQVAYDERASNVKKEYLFTVLASEPGDGTAIRKRVKYTLDILRQLNMRNSTLVISNVGDFDMRSYTLDEREKYRLLHKSYFYLSLSKNEGFGLPLMESMSVGTPAVYVNAFAFKEYAVGIPIDPYDVIIEETSYGKMDNYLIRDSDVRNALQEARECIKTSCYDELSAKALEKSKEFEMPNIEEKILSDFKSVMRHR</sequence>
<reference key="1">
    <citation type="journal article" date="2000" name="Virology">
        <title>A novel lipothrixvirus, SIFV, of the extremely thermophilic crenarchaeon Sulfolobus.</title>
        <authorList>
            <person name="Arnold H.P."/>
            <person name="Zillig W."/>
            <person name="Ziese U."/>
            <person name="Holz I."/>
            <person name="Crosby M."/>
            <person name="Utterback T."/>
            <person name="Weidmann J.F."/>
            <person name="Umayam L.A."/>
            <person name="Teffera K."/>
            <person name="Kristjanson J.K."/>
            <person name="Klenk H.P."/>
            <person name="Nelson K.E."/>
            <person name="Fraser C.M."/>
        </authorList>
    </citation>
    <scope>NUCLEOTIDE SEQUENCE [GENOMIC DNA]</scope>
</reference>
<name>GT048_SIFVH</name>
<organismHost>
    <name type="scientific">Saccharolobus islandicus</name>
    <name type="common">Sulfolobus islandicus</name>
    <dbReference type="NCBI Taxonomy" id="43080"/>
</organismHost>
<dbReference type="EC" id="2.4.-.-"/>
<dbReference type="EMBL" id="AF440571">
    <property type="protein sequence ID" value="AAL27757.1"/>
    <property type="molecule type" value="Genomic_DNA"/>
</dbReference>
<dbReference type="RefSeq" id="NP_445711.1">
    <property type="nucleotide sequence ID" value="NC_003214.2"/>
</dbReference>
<dbReference type="SMR" id="Q914I4"/>
<dbReference type="CAZy" id="GT4">
    <property type="family name" value="Glycosyltransferase Family 4"/>
</dbReference>
<dbReference type="GeneID" id="922343"/>
<dbReference type="KEGG" id="vg:922343"/>
<dbReference type="Proteomes" id="UP000007017">
    <property type="component" value="Segment"/>
</dbReference>
<dbReference type="GO" id="GO:0016757">
    <property type="term" value="F:glycosyltransferase activity"/>
    <property type="evidence" value="ECO:0007669"/>
    <property type="project" value="UniProtKB-KW"/>
</dbReference>
<dbReference type="Gene3D" id="3.40.50.2000">
    <property type="entry name" value="Glycogen Phosphorylase B"/>
    <property type="match status" value="1"/>
</dbReference>
<dbReference type="InterPro" id="IPR001296">
    <property type="entry name" value="Glyco_trans_1"/>
</dbReference>
<dbReference type="Pfam" id="PF00534">
    <property type="entry name" value="Glycos_transf_1"/>
    <property type="match status" value="1"/>
</dbReference>
<dbReference type="SUPFAM" id="SSF53756">
    <property type="entry name" value="UDP-Glycosyltransferase/glycogen phosphorylase"/>
    <property type="match status" value="1"/>
</dbReference>
<feature type="chain" id="PRO_0000385378" description="Putative glycosyltransferase 48">
    <location>
        <begin position="1"/>
        <end position="309"/>
    </location>
</feature>
<proteinExistence type="inferred from homology"/>
<comment type="similarity">
    <text evidence="1">Belongs to the glycosyltransferase group 1 family. Glycosyltransferase 4 subfamily.</text>
</comment>
<evidence type="ECO:0000305" key="1"/>
<protein>
    <recommendedName>
        <fullName>Putative glycosyltransferase 48</fullName>
        <ecNumber>2.4.-.-</ecNumber>
    </recommendedName>
</protein>
<keyword id="KW-0328">Glycosyltransferase</keyword>
<keyword id="KW-1185">Reference proteome</keyword>
<keyword id="KW-0808">Transferase</keyword>
<organism>
    <name type="scientific">Sulfolobus islandicus filamentous virus (isolate Iceland/Hveragerdi)</name>
    <name type="common">SIFV</name>
    <dbReference type="NCBI Taxonomy" id="654908"/>
    <lineage>
        <taxon>Viruses</taxon>
        <taxon>Adnaviria</taxon>
        <taxon>Zilligvirae</taxon>
        <taxon>Taleaviricota</taxon>
        <taxon>Tokiviricetes</taxon>
        <taxon>Ligamenvirales</taxon>
        <taxon>Lipothrixviridae</taxon>
        <taxon>Betalipothrixvirus</taxon>
        <taxon>Sulfolobus islandicus filamentous virus</taxon>
    </lineage>
</organism>
<accession>Q914I4</accession>
<gene>
    <name type="primary">SIFV0048</name>
</gene>